<accession>B3DQ17</accession>
<feature type="chain" id="PRO_1000127931" description="Small ribosomal subunit protein uS19">
    <location>
        <begin position="1"/>
        <end position="92"/>
    </location>
</feature>
<protein>
    <recommendedName>
        <fullName evidence="1">Small ribosomal subunit protein uS19</fullName>
    </recommendedName>
    <alternativeName>
        <fullName evidence="2">30S ribosomal protein S19</fullName>
    </alternativeName>
</protein>
<proteinExistence type="inferred from homology"/>
<keyword id="KW-0687">Ribonucleoprotein</keyword>
<keyword id="KW-0689">Ribosomal protein</keyword>
<keyword id="KW-0694">RNA-binding</keyword>
<keyword id="KW-0699">rRNA-binding</keyword>
<reference key="1">
    <citation type="journal article" date="2008" name="BMC Genomics">
        <title>Comparative genomic analysis of the gut bacterium Bifidobacterium longum reveals loci susceptible to deletion during pure culture growth.</title>
        <authorList>
            <person name="Lee J.H."/>
            <person name="Karamychev V.N."/>
            <person name="Kozyavkin S.A."/>
            <person name="Mills D."/>
            <person name="Pavlov A.R."/>
            <person name="Pavlova N.V."/>
            <person name="Polouchine N.N."/>
            <person name="Richardson P.M."/>
            <person name="Shakhova V.V."/>
            <person name="Slesarev A.I."/>
            <person name="Weimer B."/>
            <person name="O'Sullivan D.J."/>
        </authorList>
    </citation>
    <scope>NUCLEOTIDE SEQUENCE [LARGE SCALE GENOMIC DNA]</scope>
    <source>
        <strain>DJO10A</strain>
    </source>
</reference>
<dbReference type="EMBL" id="CP000605">
    <property type="protein sequence ID" value="ACD99156.1"/>
    <property type="molecule type" value="Genomic_DNA"/>
</dbReference>
<dbReference type="RefSeq" id="WP_003814508.1">
    <property type="nucleotide sequence ID" value="NZ_AABM02000025.1"/>
</dbReference>
<dbReference type="SMR" id="B3DQ17"/>
<dbReference type="GeneID" id="93093117"/>
<dbReference type="KEGG" id="blj:BLD_1711"/>
<dbReference type="HOGENOM" id="CLU_144911_0_1_11"/>
<dbReference type="Proteomes" id="UP000002419">
    <property type="component" value="Chromosome"/>
</dbReference>
<dbReference type="GO" id="GO:0005737">
    <property type="term" value="C:cytoplasm"/>
    <property type="evidence" value="ECO:0007669"/>
    <property type="project" value="UniProtKB-ARBA"/>
</dbReference>
<dbReference type="GO" id="GO:0015935">
    <property type="term" value="C:small ribosomal subunit"/>
    <property type="evidence" value="ECO:0007669"/>
    <property type="project" value="InterPro"/>
</dbReference>
<dbReference type="GO" id="GO:0019843">
    <property type="term" value="F:rRNA binding"/>
    <property type="evidence" value="ECO:0007669"/>
    <property type="project" value="UniProtKB-UniRule"/>
</dbReference>
<dbReference type="GO" id="GO:0003735">
    <property type="term" value="F:structural constituent of ribosome"/>
    <property type="evidence" value="ECO:0007669"/>
    <property type="project" value="InterPro"/>
</dbReference>
<dbReference type="GO" id="GO:0000028">
    <property type="term" value="P:ribosomal small subunit assembly"/>
    <property type="evidence" value="ECO:0007669"/>
    <property type="project" value="TreeGrafter"/>
</dbReference>
<dbReference type="GO" id="GO:0006412">
    <property type="term" value="P:translation"/>
    <property type="evidence" value="ECO:0007669"/>
    <property type="project" value="UniProtKB-UniRule"/>
</dbReference>
<dbReference type="FunFam" id="3.30.860.10:FF:000001">
    <property type="entry name" value="30S ribosomal protein S19"/>
    <property type="match status" value="1"/>
</dbReference>
<dbReference type="Gene3D" id="3.30.860.10">
    <property type="entry name" value="30s Ribosomal Protein S19, Chain A"/>
    <property type="match status" value="1"/>
</dbReference>
<dbReference type="HAMAP" id="MF_00531">
    <property type="entry name" value="Ribosomal_uS19"/>
    <property type="match status" value="1"/>
</dbReference>
<dbReference type="InterPro" id="IPR002222">
    <property type="entry name" value="Ribosomal_uS19"/>
</dbReference>
<dbReference type="InterPro" id="IPR005732">
    <property type="entry name" value="Ribosomal_uS19_bac-type"/>
</dbReference>
<dbReference type="InterPro" id="IPR020934">
    <property type="entry name" value="Ribosomal_uS19_CS"/>
</dbReference>
<dbReference type="InterPro" id="IPR023575">
    <property type="entry name" value="Ribosomal_uS19_SF"/>
</dbReference>
<dbReference type="NCBIfam" id="TIGR01050">
    <property type="entry name" value="rpsS_bact"/>
    <property type="match status" value="1"/>
</dbReference>
<dbReference type="PANTHER" id="PTHR11880">
    <property type="entry name" value="RIBOSOMAL PROTEIN S19P FAMILY MEMBER"/>
    <property type="match status" value="1"/>
</dbReference>
<dbReference type="PANTHER" id="PTHR11880:SF8">
    <property type="entry name" value="SMALL RIBOSOMAL SUBUNIT PROTEIN US19M"/>
    <property type="match status" value="1"/>
</dbReference>
<dbReference type="Pfam" id="PF00203">
    <property type="entry name" value="Ribosomal_S19"/>
    <property type="match status" value="1"/>
</dbReference>
<dbReference type="PIRSF" id="PIRSF002144">
    <property type="entry name" value="Ribosomal_S19"/>
    <property type="match status" value="1"/>
</dbReference>
<dbReference type="PRINTS" id="PR00975">
    <property type="entry name" value="RIBOSOMALS19"/>
</dbReference>
<dbReference type="SUPFAM" id="SSF54570">
    <property type="entry name" value="Ribosomal protein S19"/>
    <property type="match status" value="1"/>
</dbReference>
<dbReference type="PROSITE" id="PS00323">
    <property type="entry name" value="RIBOSOMAL_S19"/>
    <property type="match status" value="1"/>
</dbReference>
<sequence>MTRSIKKGPFVDAHLQKKVDEQNEKGTKNVIKTWSRRSMITPDFIGHTFAVHDGRKHVPVFVTEAMVGHKLGEFAPTKTFKGHVKDDKKARR</sequence>
<comment type="function">
    <text evidence="1">Protein S19 forms a complex with S13 that binds strongly to the 16S ribosomal RNA.</text>
</comment>
<comment type="similarity">
    <text evidence="1">Belongs to the universal ribosomal protein uS19 family.</text>
</comment>
<name>RS19_BIFLD</name>
<organism>
    <name type="scientific">Bifidobacterium longum (strain DJO10A)</name>
    <dbReference type="NCBI Taxonomy" id="205913"/>
    <lineage>
        <taxon>Bacteria</taxon>
        <taxon>Bacillati</taxon>
        <taxon>Actinomycetota</taxon>
        <taxon>Actinomycetes</taxon>
        <taxon>Bifidobacteriales</taxon>
        <taxon>Bifidobacteriaceae</taxon>
        <taxon>Bifidobacterium</taxon>
    </lineage>
</organism>
<evidence type="ECO:0000255" key="1">
    <source>
        <dbReference type="HAMAP-Rule" id="MF_00531"/>
    </source>
</evidence>
<evidence type="ECO:0000305" key="2"/>
<gene>
    <name evidence="1" type="primary">rpsS</name>
    <name type="ordered locus">BLD_1711</name>
</gene>